<feature type="chain" id="PRO_0000460744" description="Urease accessory protein 2">
    <location>
        <begin position="1"/>
        <end position="1208"/>
    </location>
</feature>
<feature type="domain" description="SMC hinge" evidence="2">
    <location>
        <begin position="523"/>
        <end position="633"/>
    </location>
</feature>
<feature type="region of interest" description="Disordered" evidence="3">
    <location>
        <begin position="748"/>
        <end position="773"/>
    </location>
</feature>
<feature type="coiled-coil region" evidence="2">
    <location>
        <begin position="187"/>
        <end position="362"/>
    </location>
</feature>
<feature type="coiled-coil region" evidence="2">
    <location>
        <begin position="400"/>
        <end position="469"/>
    </location>
</feature>
<feature type="coiled-coil region" evidence="2">
    <location>
        <begin position="688"/>
        <end position="771"/>
    </location>
</feature>
<feature type="coiled-coil region" evidence="2">
    <location>
        <begin position="817"/>
        <end position="903"/>
    </location>
</feature>
<feature type="compositionally biased region" description="Basic and acidic residues" evidence="3">
    <location>
        <begin position="756"/>
        <end position="773"/>
    </location>
</feature>
<proteinExistence type="inferred from homology"/>
<gene>
    <name evidence="6" type="primary">URE2</name>
    <name type="ORF">CNAG_01167</name>
</gene>
<sequence>MYIKTITIQGFKSYRDQVAVDPFSPGHNVVVGRNGSGKSNFFSAIRFVLSDQYTKLSREERQRLLHEGTSTSTTLSAYVEIVFDNSDGRFPTGRQELVLRRTIGLKKDEYSLDRKSASKSEVDQLLESAGFSKANPYYIVPQGRITHLTNMNDRERLRLLKDVAGTEVYEQKRAESTRIMEETDGKRDKILELLTTIEDRLRELEEEKEELKEYQEKDRERRCLEYALHQRELEDVTNALDEIEAERRQDIHDSNEKRKEFNDREDEIQRYEEALTAAKHSLSTTQASLRQYETERADLVRNKTELECVIADFETAGQVGEHRRAELAEELEVMQQKVDEATARLEDLVQEAEQRIGEEKAAREALEPTQSKLSVLFAKQGRAQQFATQAARDEYLRDEIKALEEHEKNQGRRVEILQNEVAGAKEQLAQLSAKSEQQAQGENDRRENLKKMNEEIAQLQTNIAGMHEQKKELWREEGKLTQIEVNAKSEMEAAERSLMGMMNKDTSNGLRAVRQIAKRLNLDGVFGPLYDLFEVSDKYKTAVEVTAGNSLFHVVVDNDETASKLLDVMNREKSGRVTFMPLNRLKSHSVNYPKANDAIPMIQKLQFDREYVMAFEQVFGRTIICEDLQTAAHYTRSHGLNAVTIEGDRVDRKGALTGGYHDVRRSRLDTVKAAKKWRTAYETDHARHIEVKAALQNLEQEVTRAMGQVQALEAKKRHISDGGEGLFKLLTLPARDLDQARDRVTRLESSLEEAEGASRDAKAKRASYEEELRTPMRQNLTDEELRELETLTQSVESQKKLLFDATQSRAKAVGERNRLEIELSENLRRKRQELRDKLDRLEGEAGNGELQSGEVELRRNELRNLVRDIEQLEEKVSESEGRVDELNSEISKISENLERVQTQQMENTRAIMRVQKNAERYLTKRQTLINRREECNNAIRDLGALPEEAFSKYTDQRSDKIIKRLHKVNDGLKKFAHVNKKAFEQYNNFTKQRDELMDRRDELDQSAVKIEELIETLDQRKDEAIERTFKQVSKYFEEVFETLVPLGKGELIMQKKTDGFIEEESEESLEQGREKSDIDSYTGVSIRVSFNSKHDEGQRIQQLSGGQKSLVALALVFAIQKCDPAPFYLFDEIDANLDAQYRTAVATMIHTLSTSAQFITTTFKSEMLAQADKFYGVFFDKQKVSTIKVIEKEEASDFVETAAQVGQL</sequence>
<dbReference type="EMBL" id="CP003824">
    <property type="protein sequence ID" value="AFR94978.2"/>
    <property type="molecule type" value="Genomic_DNA"/>
</dbReference>
<dbReference type="RefSeq" id="XP_012049033.1">
    <property type="nucleotide sequence ID" value="XM_012193643.1"/>
</dbReference>
<dbReference type="SMR" id="J9VL63"/>
<dbReference type="GeneID" id="23884909"/>
<dbReference type="KEGG" id="cng:CNAG_01167"/>
<dbReference type="VEuPathDB" id="FungiDB:CNAG_01167"/>
<dbReference type="HOGENOM" id="CLU_001042_5_0_1"/>
<dbReference type="OrthoDB" id="4953at5206"/>
<dbReference type="Proteomes" id="UP000010091">
    <property type="component" value="Chromosome 5"/>
</dbReference>
<dbReference type="GO" id="GO:0005694">
    <property type="term" value="C:chromosome"/>
    <property type="evidence" value="ECO:0007669"/>
    <property type="project" value="InterPro"/>
</dbReference>
<dbReference type="GO" id="GO:0005634">
    <property type="term" value="C:nucleus"/>
    <property type="evidence" value="ECO:0007669"/>
    <property type="project" value="UniProtKB-SubCell"/>
</dbReference>
<dbReference type="GO" id="GO:0005524">
    <property type="term" value="F:ATP binding"/>
    <property type="evidence" value="ECO:0007669"/>
    <property type="project" value="InterPro"/>
</dbReference>
<dbReference type="GO" id="GO:0016887">
    <property type="term" value="F:ATP hydrolysis activity"/>
    <property type="evidence" value="ECO:0007669"/>
    <property type="project" value="InterPro"/>
</dbReference>
<dbReference type="GO" id="GO:0051301">
    <property type="term" value="P:cell division"/>
    <property type="evidence" value="ECO:0007669"/>
    <property type="project" value="UniProtKB-KW"/>
</dbReference>
<dbReference type="GO" id="GO:0051276">
    <property type="term" value="P:chromosome organization"/>
    <property type="evidence" value="ECO:0007669"/>
    <property type="project" value="InterPro"/>
</dbReference>
<dbReference type="GO" id="GO:0007059">
    <property type="term" value="P:chromosome segregation"/>
    <property type="evidence" value="ECO:0007669"/>
    <property type="project" value="UniProtKB-ARBA"/>
</dbReference>
<dbReference type="CDD" id="cd03272">
    <property type="entry name" value="ABC_SMC3_euk"/>
    <property type="match status" value="1"/>
</dbReference>
<dbReference type="FunFam" id="3.40.50.300:FF:000370">
    <property type="entry name" value="Structural maintenance of chromosomes 3"/>
    <property type="match status" value="1"/>
</dbReference>
<dbReference type="FunFam" id="3.40.50.300:FF:000424">
    <property type="entry name" value="Structural maintenance of chromosomes 3"/>
    <property type="match status" value="1"/>
</dbReference>
<dbReference type="Gene3D" id="1.10.287.1490">
    <property type="match status" value="1"/>
</dbReference>
<dbReference type="Gene3D" id="1.20.1060.20">
    <property type="match status" value="1"/>
</dbReference>
<dbReference type="Gene3D" id="3.30.70.1620">
    <property type="match status" value="1"/>
</dbReference>
<dbReference type="Gene3D" id="3.40.50.300">
    <property type="entry name" value="P-loop containing nucleotide triphosphate hydrolases"/>
    <property type="match status" value="2"/>
</dbReference>
<dbReference type="InterPro" id="IPR027417">
    <property type="entry name" value="P-loop_NTPase"/>
</dbReference>
<dbReference type="InterPro" id="IPR003395">
    <property type="entry name" value="RecF/RecN/SMC_N"/>
</dbReference>
<dbReference type="InterPro" id="IPR024704">
    <property type="entry name" value="SMC"/>
</dbReference>
<dbReference type="InterPro" id="IPR041741">
    <property type="entry name" value="SMC3_ABC_euk"/>
</dbReference>
<dbReference type="InterPro" id="IPR010935">
    <property type="entry name" value="SMC_hinge"/>
</dbReference>
<dbReference type="InterPro" id="IPR036277">
    <property type="entry name" value="SMC_hinge_sf"/>
</dbReference>
<dbReference type="PANTHER" id="PTHR43977">
    <property type="entry name" value="STRUCTURAL MAINTENANCE OF CHROMOSOMES PROTEIN 3"/>
    <property type="match status" value="1"/>
</dbReference>
<dbReference type="Pfam" id="PF06470">
    <property type="entry name" value="SMC_hinge"/>
    <property type="match status" value="1"/>
</dbReference>
<dbReference type="Pfam" id="PF02463">
    <property type="entry name" value="SMC_N"/>
    <property type="match status" value="1"/>
</dbReference>
<dbReference type="PIRSF" id="PIRSF005719">
    <property type="entry name" value="SMC"/>
    <property type="match status" value="1"/>
</dbReference>
<dbReference type="SMART" id="SM00968">
    <property type="entry name" value="SMC_hinge"/>
    <property type="match status" value="1"/>
</dbReference>
<dbReference type="SUPFAM" id="SSF52540">
    <property type="entry name" value="P-loop containing nucleoside triphosphate hydrolases"/>
    <property type="match status" value="2"/>
</dbReference>
<dbReference type="SUPFAM" id="SSF75553">
    <property type="entry name" value="Smc hinge domain"/>
    <property type="match status" value="1"/>
</dbReference>
<name>URE2_CRYNH</name>
<comment type="function">
    <text evidence="1 5">Central component of cohesin, a complex required for chromosome cohesion during the cell cycle. The cohesin complex may form a large proteinaceous ring within which sister chromatids can be trapped. At anaphase, the complex is cleaved and dissociates from chromatin, allowing sister chromatids to segregate. Cohesion is coupled to DNA replication and is involved in DNA repair. The cohesin complex also plays an important role in spindle pole assembly during mitosis and in chromosomes movement (By similarity). Is unrelated to urease function in C.neoformans (PubMed:23653445).</text>
</comment>
<comment type="subunit">
    <text evidence="1">Component of cohesin complexes.</text>
</comment>
<comment type="subcellular location">
    <subcellularLocation>
        <location evidence="7">Nucleus</location>
    </subcellularLocation>
</comment>
<comment type="disruption phenotype">
    <text evidence="5">Does not affect urease function.</text>
</comment>
<comment type="similarity">
    <text evidence="7">Belongs to the SMC family. SMC3 subfamily.</text>
</comment>
<comment type="caution">
    <text evidence="4 5">URE2 was found to functionally complement the urease-negative clinical strain B-4587 which is an enigma since it is a homolog of the chromosome segregation-associated proteins (PubMed:17159224). However, it was later shown that URE2 was unrelated to urease function in C.neoformans and was apparently mistaken for the URE4 function during complementation attempts due to the tight linkage between the two genes on the DNA insertion used for complementation (PubMed:23653445).</text>
</comment>
<accession>J9VL63</accession>
<organism>
    <name type="scientific">Cryptococcus neoformans var. grubii serotype A (strain H99 / ATCC 208821 / CBS 10515 / FGSC 9487)</name>
    <name type="common">Filobasidiella neoformans var. grubii</name>
    <dbReference type="NCBI Taxonomy" id="235443"/>
    <lineage>
        <taxon>Eukaryota</taxon>
        <taxon>Fungi</taxon>
        <taxon>Dikarya</taxon>
        <taxon>Basidiomycota</taxon>
        <taxon>Agaricomycotina</taxon>
        <taxon>Tremellomycetes</taxon>
        <taxon>Tremellales</taxon>
        <taxon>Cryptococcaceae</taxon>
        <taxon>Cryptococcus</taxon>
        <taxon>Cryptococcus neoformans species complex</taxon>
    </lineage>
</organism>
<reference key="1">
    <citation type="journal article" date="2014" name="PLoS Genet.">
        <title>Analysis of the genome and transcriptome of Cryptococcus neoformans var. grubii reveals complex RNA expression and microevolution leading to virulence attenuation.</title>
        <authorList>
            <person name="Janbon G."/>
            <person name="Ormerod K.L."/>
            <person name="Paulet D."/>
            <person name="Byrnes E.J. III"/>
            <person name="Yadav V."/>
            <person name="Chatterjee G."/>
            <person name="Mullapudi N."/>
            <person name="Hon C.-C."/>
            <person name="Billmyre R.B."/>
            <person name="Brunel F."/>
            <person name="Bahn Y.-S."/>
            <person name="Chen W."/>
            <person name="Chen Y."/>
            <person name="Chow E.W.L."/>
            <person name="Coppee J.-Y."/>
            <person name="Floyd-Averette A."/>
            <person name="Gaillardin C."/>
            <person name="Gerik K.J."/>
            <person name="Goldberg J."/>
            <person name="Gonzalez-Hilarion S."/>
            <person name="Gujja S."/>
            <person name="Hamlin J.L."/>
            <person name="Hsueh Y.-P."/>
            <person name="Ianiri G."/>
            <person name="Jones S."/>
            <person name="Kodira C.D."/>
            <person name="Kozubowski L."/>
            <person name="Lam W."/>
            <person name="Marra M."/>
            <person name="Mesner L.D."/>
            <person name="Mieczkowski P.A."/>
            <person name="Moyrand F."/>
            <person name="Nielsen K."/>
            <person name="Proux C."/>
            <person name="Rossignol T."/>
            <person name="Schein J.E."/>
            <person name="Sun S."/>
            <person name="Wollschlaeger C."/>
            <person name="Wood I.A."/>
            <person name="Zeng Q."/>
            <person name="Neuveglise C."/>
            <person name="Newlon C.S."/>
            <person name="Perfect J.R."/>
            <person name="Lodge J.K."/>
            <person name="Idnurm A."/>
            <person name="Stajich J.E."/>
            <person name="Kronstad J.W."/>
            <person name="Sanyal K."/>
            <person name="Heitman J."/>
            <person name="Fraser J.A."/>
            <person name="Cuomo C.A."/>
            <person name="Dietrich F.S."/>
        </authorList>
    </citation>
    <scope>NUCLEOTIDE SEQUENCE [LARGE SCALE GENOMIC DNA]</scope>
    <source>
        <strain>H99 / ATCC 208821 / CBS 10515 / FGSC 9487</strain>
    </source>
</reference>
<reference key="2">
    <citation type="journal article" date="2006" name="Microbiology">
        <title>Identification of a novel gene, URE2, that functionally complements a urease-negative clinical strain of Cryptococcus neoformans.</title>
        <authorList>
            <person name="Varma A."/>
            <person name="Wu S."/>
            <person name="Guo N."/>
            <person name="Liao W."/>
            <person name="Lu G."/>
            <person name="Li A."/>
            <person name="Hu Y."/>
            <person name="Bulmer G."/>
            <person name="Kwon-Chung K.J."/>
        </authorList>
    </citation>
    <scope>IDENTIFICATION</scope>
</reference>
<reference key="3">
    <citation type="journal article" date="2013" name="MBio">
        <title>Factors required for activation of urease as a virulence determinant in Cryptococcus neoformans.</title>
        <authorList>
            <person name="Singh A."/>
            <person name="Panting R.J."/>
            <person name="Varma A."/>
            <person name="Saijo T."/>
            <person name="Waldron K.J."/>
            <person name="Jong A."/>
            <person name="Ngamskulrungroj P."/>
            <person name="Chang Y.C."/>
            <person name="Rutherford J.C."/>
            <person name="Kwon-Chung K.J."/>
        </authorList>
    </citation>
    <scope>FUNCTION</scope>
    <scope>DISRUPTION PHENOTYPE</scope>
</reference>
<keyword id="KW-0131">Cell cycle</keyword>
<keyword id="KW-0132">Cell division</keyword>
<keyword id="KW-0175">Coiled coil</keyword>
<keyword id="KW-0498">Mitosis</keyword>
<keyword id="KW-0539">Nucleus</keyword>
<protein>
    <recommendedName>
        <fullName evidence="6">Urease accessory protein 2</fullName>
    </recommendedName>
</protein>
<evidence type="ECO:0000250" key="1">
    <source>
        <dbReference type="UniProtKB" id="Q9UQE7"/>
    </source>
</evidence>
<evidence type="ECO:0000255" key="2"/>
<evidence type="ECO:0000256" key="3">
    <source>
        <dbReference type="SAM" id="MobiDB-lite"/>
    </source>
</evidence>
<evidence type="ECO:0000269" key="4">
    <source>
    </source>
</evidence>
<evidence type="ECO:0000269" key="5">
    <source>
    </source>
</evidence>
<evidence type="ECO:0000303" key="6">
    <source>
    </source>
</evidence>
<evidence type="ECO:0000305" key="7"/>